<comment type="function">
    <text evidence="3">Component of neuronal acetylcholine receptors (nAChRs) that function as pentameric, ligand-gated cation channels with high calcium permeability among other activities. nAChRs are excitatory neurotrasnmitter receptors formed by a collection of nAChR subunits known to mediate synaptic transmission in the nervous system and the neuromuscular junction. Each nAchR subunit confers differential attributes to channel properties, including activation, deactivation and desensitization kinetics, pH sensitivity, cation permeability, and binding to allosteric modulators. CHRNA2 forms heteropentameric neuronal acetylcholine receptors with CHRNB2 and CHRNB4 and plays a role in nicotine dependence.</text>
</comment>
<comment type="catalytic activity">
    <reaction evidence="2">
        <text>Ca(2+)(in) = Ca(2+)(out)</text>
        <dbReference type="Rhea" id="RHEA:29671"/>
        <dbReference type="ChEBI" id="CHEBI:29108"/>
    </reaction>
</comment>
<comment type="catalytic activity">
    <reaction evidence="1">
        <text>K(+)(in) = K(+)(out)</text>
        <dbReference type="Rhea" id="RHEA:29463"/>
        <dbReference type="ChEBI" id="CHEBI:29103"/>
    </reaction>
</comment>
<comment type="catalytic activity">
    <reaction evidence="2">
        <text>Na(+)(in) = Na(+)(out)</text>
        <dbReference type="Rhea" id="RHEA:34963"/>
        <dbReference type="ChEBI" id="CHEBI:29101"/>
    </reaction>
</comment>
<comment type="subunit">
    <text evidence="3">Neuronal AChR is composed of two different types of subunits: alpha and non-alpha (beta). CHRNA2/alpha-2 subunit can be combined to CHRNB2/beta-2 or CHRNB4/beta-4 to give rise to functional receptors. Both CHRNA2:CHRNB2 and CHRNA2:CHRNB4 nAChR complexes are heteropentamers with two subtypes: LS (low agonist sensitivity) with a (CHRNA2)3:(CHRNB2/4)2 and HS (high agonist sensitivity) with a (CHRNA2)2:(CHRNB2/4)3 stoichiometries; the subtypes differ in their subunit binding interfaces which are involved in ligand binding.</text>
</comment>
<comment type="subcellular location">
    <subcellularLocation>
        <location evidence="3">Synaptic cell membrane</location>
        <topology evidence="4">Multi-pass membrane protein</topology>
    </subcellularLocation>
    <subcellularLocation>
        <location evidence="3">Cell membrane</location>
        <topology evidence="4">Multi-pass membrane protein</topology>
    </subcellularLocation>
</comment>
<comment type="similarity">
    <text evidence="5">Belongs to the ligand-gated ion channel (TC 1.A.9) family. Acetylcholine receptor (TC 1.A.9.1) subfamily. Alpha-2/CHRNA2 sub-subfamily.</text>
</comment>
<organism>
    <name type="scientific">Mus musculus</name>
    <name type="common">Mouse</name>
    <dbReference type="NCBI Taxonomy" id="10090"/>
    <lineage>
        <taxon>Eukaryota</taxon>
        <taxon>Metazoa</taxon>
        <taxon>Chordata</taxon>
        <taxon>Craniata</taxon>
        <taxon>Vertebrata</taxon>
        <taxon>Euteleostomi</taxon>
        <taxon>Mammalia</taxon>
        <taxon>Eutheria</taxon>
        <taxon>Euarchontoglires</taxon>
        <taxon>Glires</taxon>
        <taxon>Rodentia</taxon>
        <taxon>Myomorpha</taxon>
        <taxon>Muroidea</taxon>
        <taxon>Muridae</taxon>
        <taxon>Murinae</taxon>
        <taxon>Mus</taxon>
        <taxon>Mus</taxon>
    </lineage>
</organism>
<reference key="1">
    <citation type="submission" date="2004-03" db="EMBL/GenBank/DDBJ databases">
        <authorList>
            <person name="Groot-Kormelink P.J."/>
        </authorList>
    </citation>
    <scope>NUCLEOTIDE SEQUENCE [MRNA]</scope>
    <source>
        <strain>BALB/cJ</strain>
        <tissue>Brain</tissue>
    </source>
</reference>
<reference key="2">
    <citation type="journal article" date="2004" name="Genome Res.">
        <title>The status, quality, and expansion of the NIH full-length cDNA project: the Mammalian Gene Collection (MGC).</title>
        <authorList>
            <consortium name="The MGC Project Team"/>
        </authorList>
    </citation>
    <scope>NUCLEOTIDE SEQUENCE [LARGE SCALE MRNA]</scope>
    <source>
        <strain>FVB/N</strain>
        <tissue>Salivary gland</tissue>
    </source>
</reference>
<sequence>MAPSHPAFQFWIHLYLWCLLLMPAVLAQQGSHTHAEDRLFKHLFGGYNRWARPVPNTSDVVIVRFGLSIAQLIDVDEKNQMMTTNVWLKQEWNDYKLRWDPAEFGNITSLRVPSEMIWIPDIVLYNNADGEFAVTHMTKAHLFFTGTVHWVPPAIYKSSCSIDVTFFPFDQQNCKMKFGSWTYDKAKIDLEQMERTVDLKDYWESGEWAIINATGTYNSKKYDCCAEIYPDVTYYFVIRRLPLFYTINLIIPCLLISCLTVLVFYLPSECGEKITLCISVLLSLTVFLLLITEIIPSTSLVIPLIGEYLLFTMIFVTLSIVITVFVLNVHHRSPSTHNMPNWVRVALLGRVPRWLMMNRPLPPMELHGSPGLKLSPTYHWLETNMDAEEREETEEEEEEEEDENICMCAGLPDSSMGVLYGHGSLHLRAMGPEAKTPSQASEILLSPQIQKALEGVHYIADHLRSEDADSSVKEDWKYVAMVVDRIFLWLFIIVCFLGTIGLFLPPFLAGMI</sequence>
<dbReference type="EMBL" id="AY574261">
    <property type="protein sequence ID" value="AAS90357.1"/>
    <property type="molecule type" value="mRNA"/>
</dbReference>
<dbReference type="EMBL" id="BC011490">
    <property type="protein sequence ID" value="AAH11490.1"/>
    <property type="molecule type" value="mRNA"/>
</dbReference>
<dbReference type="CCDS" id="CCDS27219.1"/>
<dbReference type="RefSeq" id="NP_001412497.1">
    <property type="nucleotide sequence ID" value="NM_001425568.1"/>
</dbReference>
<dbReference type="RefSeq" id="NP_659052.1">
    <property type="nucleotide sequence ID" value="NM_144803.3"/>
</dbReference>
<dbReference type="RefSeq" id="XP_006518497.1">
    <property type="nucleotide sequence ID" value="XM_006518434.3"/>
</dbReference>
<dbReference type="RefSeq" id="XP_006518498.1">
    <property type="nucleotide sequence ID" value="XM_006518435.3"/>
</dbReference>
<dbReference type="RefSeq" id="XP_006518499.1">
    <property type="nucleotide sequence ID" value="XM_006518436.4"/>
</dbReference>
<dbReference type="SMR" id="Q91X60"/>
<dbReference type="ComplexPortal" id="CPX-174">
    <property type="entry name" value="Neuronal nicotinic acetylcholine receptor complex, alpha2-beta2"/>
</dbReference>
<dbReference type="ComplexPortal" id="CPX-182">
    <property type="entry name" value="Neuronal nicotinic acetylcholine receptor complex, alpha2-beta4"/>
</dbReference>
<dbReference type="FunCoup" id="Q91X60">
    <property type="interactions" value="398"/>
</dbReference>
<dbReference type="STRING" id="10090.ENSMUSP00000022620"/>
<dbReference type="ChEMBL" id="CHEMBL3350222"/>
<dbReference type="GlyCosmos" id="Q91X60">
    <property type="glycosylation" value="3 sites, No reported glycans"/>
</dbReference>
<dbReference type="GlyGen" id="Q91X60">
    <property type="glycosylation" value="3 sites, 1 N-linked glycan (1 site)"/>
</dbReference>
<dbReference type="iPTMnet" id="Q91X60"/>
<dbReference type="PhosphoSitePlus" id="Q91X60"/>
<dbReference type="PaxDb" id="10090-ENSMUSP00000022620"/>
<dbReference type="ProteomicsDB" id="286066"/>
<dbReference type="Antibodypedia" id="10197">
    <property type="antibodies" value="165 antibodies from 25 providers"/>
</dbReference>
<dbReference type="DNASU" id="110902"/>
<dbReference type="Ensembl" id="ENSMUST00000022620.11">
    <property type="protein sequence ID" value="ENSMUSP00000022620.10"/>
    <property type="gene ID" value="ENSMUSG00000022041.11"/>
</dbReference>
<dbReference type="Ensembl" id="ENSMUST00000206455.2">
    <property type="protein sequence ID" value="ENSMUSP00000145896.2"/>
    <property type="gene ID" value="ENSMUSG00000022041.11"/>
</dbReference>
<dbReference type="GeneID" id="110902"/>
<dbReference type="KEGG" id="mmu:110902"/>
<dbReference type="UCSC" id="uc007ujx.1">
    <property type="organism name" value="mouse"/>
</dbReference>
<dbReference type="AGR" id="MGI:87886"/>
<dbReference type="CTD" id="1135"/>
<dbReference type="MGI" id="MGI:87886">
    <property type="gene designation" value="Chrna2"/>
</dbReference>
<dbReference type="VEuPathDB" id="HostDB:ENSMUSG00000022041"/>
<dbReference type="eggNOG" id="KOG3645">
    <property type="taxonomic scope" value="Eukaryota"/>
</dbReference>
<dbReference type="GeneTree" id="ENSGT00940000158299"/>
<dbReference type="HOGENOM" id="CLU_018074_1_0_1"/>
<dbReference type="InParanoid" id="Q91X60"/>
<dbReference type="OMA" id="SSYHWLE"/>
<dbReference type="OrthoDB" id="5975154at2759"/>
<dbReference type="PhylomeDB" id="Q91X60"/>
<dbReference type="TreeFam" id="TF315605"/>
<dbReference type="Reactome" id="R-MMU-629594">
    <property type="pathway name" value="Highly calcium permeable postsynaptic nicotinic acetylcholine receptors"/>
</dbReference>
<dbReference type="Reactome" id="R-MMU-629597">
    <property type="pathway name" value="Highly calcium permeable nicotinic acetylcholine receptors"/>
</dbReference>
<dbReference type="BioGRID-ORCS" id="110902">
    <property type="hits" value="3 hits in 76 CRISPR screens"/>
</dbReference>
<dbReference type="PRO" id="PR:Q91X60"/>
<dbReference type="Proteomes" id="UP000000589">
    <property type="component" value="Chromosome 14"/>
</dbReference>
<dbReference type="RNAct" id="Q91X60">
    <property type="molecule type" value="protein"/>
</dbReference>
<dbReference type="Bgee" id="ENSMUSG00000022041">
    <property type="expression patterns" value="Expressed in retinal neural layer and 32 other cell types or tissues"/>
</dbReference>
<dbReference type="GO" id="GO:0005892">
    <property type="term" value="C:acetylcholine-gated channel complex"/>
    <property type="evidence" value="ECO:0007669"/>
    <property type="project" value="Ensembl"/>
</dbReference>
<dbReference type="GO" id="GO:0034703">
    <property type="term" value="C:cation channel complex"/>
    <property type="evidence" value="ECO:0007669"/>
    <property type="project" value="Ensembl"/>
</dbReference>
<dbReference type="GO" id="GO:0071944">
    <property type="term" value="C:cell periphery"/>
    <property type="evidence" value="ECO:0000314"/>
    <property type="project" value="MGI"/>
</dbReference>
<dbReference type="GO" id="GO:0045171">
    <property type="term" value="C:intercellular bridge"/>
    <property type="evidence" value="ECO:0007669"/>
    <property type="project" value="Ensembl"/>
</dbReference>
<dbReference type="GO" id="GO:0120111">
    <property type="term" value="C:neuron projection cytoplasm"/>
    <property type="evidence" value="ECO:0007669"/>
    <property type="project" value="Ensembl"/>
</dbReference>
<dbReference type="GO" id="GO:0098878">
    <property type="term" value="C:neurotransmitter receptor complex"/>
    <property type="evidence" value="ECO:0007669"/>
    <property type="project" value="Ensembl"/>
</dbReference>
<dbReference type="GO" id="GO:0005654">
    <property type="term" value="C:nucleoplasm"/>
    <property type="evidence" value="ECO:0007669"/>
    <property type="project" value="Ensembl"/>
</dbReference>
<dbReference type="GO" id="GO:0045211">
    <property type="term" value="C:postsynaptic membrane"/>
    <property type="evidence" value="ECO:0007669"/>
    <property type="project" value="UniProtKB-KW"/>
</dbReference>
<dbReference type="GO" id="GO:0015464">
    <property type="term" value="F:acetylcholine receptor activity"/>
    <property type="evidence" value="ECO:0007669"/>
    <property type="project" value="Ensembl"/>
</dbReference>
<dbReference type="GO" id="GO:0022848">
    <property type="term" value="F:acetylcholine-gated monoatomic cation-selective channel activity"/>
    <property type="evidence" value="ECO:0007669"/>
    <property type="project" value="Ensembl"/>
</dbReference>
<dbReference type="GO" id="GO:1901363">
    <property type="term" value="F:heterocyclic compound binding"/>
    <property type="evidence" value="ECO:0007669"/>
    <property type="project" value="Ensembl"/>
</dbReference>
<dbReference type="GO" id="GO:0050997">
    <property type="term" value="F:quaternary ammonium group binding"/>
    <property type="evidence" value="ECO:0007669"/>
    <property type="project" value="Ensembl"/>
</dbReference>
<dbReference type="GO" id="GO:0071316">
    <property type="term" value="P:cellular response to nicotine"/>
    <property type="evidence" value="ECO:0007669"/>
    <property type="project" value="Ensembl"/>
</dbReference>
<dbReference type="GO" id="GO:0098828">
    <property type="term" value="P:modulation of inhibitory postsynaptic potential"/>
    <property type="evidence" value="ECO:0007669"/>
    <property type="project" value="Ensembl"/>
</dbReference>
<dbReference type="GO" id="GO:0048167">
    <property type="term" value="P:regulation of synaptic plasticity"/>
    <property type="evidence" value="ECO:0000315"/>
    <property type="project" value="MGI"/>
</dbReference>
<dbReference type="GO" id="GO:1905144">
    <property type="term" value="P:response to acetylcholine"/>
    <property type="evidence" value="ECO:0007669"/>
    <property type="project" value="Ensembl"/>
</dbReference>
<dbReference type="CDD" id="cd19015">
    <property type="entry name" value="LGIC_ECD_nAChR_A2"/>
    <property type="match status" value="1"/>
</dbReference>
<dbReference type="CDD" id="cd19064">
    <property type="entry name" value="LGIC_TM_nAChR"/>
    <property type="match status" value="1"/>
</dbReference>
<dbReference type="FunFam" id="1.20.58.390:FF:000014">
    <property type="entry name" value="Neuronal nicotinic acetylcholine receptor alpha4 subunit"/>
    <property type="match status" value="1"/>
</dbReference>
<dbReference type="FunFam" id="2.70.170.10:FF:000005">
    <property type="entry name" value="Neuronal nicotinic acetylcholine receptor alpha4 subunit"/>
    <property type="match status" value="1"/>
</dbReference>
<dbReference type="FunFam" id="1.20.58.390:FF:000001">
    <property type="entry name" value="Neuronal nicotinic acetylcholine receptor subunit 3"/>
    <property type="match status" value="1"/>
</dbReference>
<dbReference type="Gene3D" id="2.70.170.10">
    <property type="entry name" value="Neurotransmitter-gated ion-channel ligand-binding domain"/>
    <property type="match status" value="1"/>
</dbReference>
<dbReference type="Gene3D" id="1.20.58.390">
    <property type="entry name" value="Neurotransmitter-gated ion-channel transmembrane domain"/>
    <property type="match status" value="2"/>
</dbReference>
<dbReference type="InterPro" id="IPR006202">
    <property type="entry name" value="Neur_chan_lig-bd"/>
</dbReference>
<dbReference type="InterPro" id="IPR036734">
    <property type="entry name" value="Neur_chan_lig-bd_sf"/>
</dbReference>
<dbReference type="InterPro" id="IPR006201">
    <property type="entry name" value="Neur_channel"/>
</dbReference>
<dbReference type="InterPro" id="IPR036719">
    <property type="entry name" value="Neuro-gated_channel_TM_sf"/>
</dbReference>
<dbReference type="InterPro" id="IPR038050">
    <property type="entry name" value="Neuro_actylchol_rec"/>
</dbReference>
<dbReference type="InterPro" id="IPR006029">
    <property type="entry name" value="Neurotrans-gated_channel_TM"/>
</dbReference>
<dbReference type="InterPro" id="IPR018000">
    <property type="entry name" value="Neurotransmitter_ion_chnl_CS"/>
</dbReference>
<dbReference type="InterPro" id="IPR002394">
    <property type="entry name" value="Nicotinic_acetylcholine_rcpt"/>
</dbReference>
<dbReference type="NCBIfam" id="TIGR00860">
    <property type="entry name" value="LIC"/>
    <property type="match status" value="1"/>
</dbReference>
<dbReference type="PANTHER" id="PTHR18945">
    <property type="entry name" value="NEUROTRANSMITTER GATED ION CHANNEL"/>
    <property type="match status" value="1"/>
</dbReference>
<dbReference type="Pfam" id="PF02931">
    <property type="entry name" value="Neur_chan_LBD"/>
    <property type="match status" value="1"/>
</dbReference>
<dbReference type="Pfam" id="PF02932">
    <property type="entry name" value="Neur_chan_memb"/>
    <property type="match status" value="1"/>
</dbReference>
<dbReference type="PRINTS" id="PR00254">
    <property type="entry name" value="NICOTINICR"/>
</dbReference>
<dbReference type="PRINTS" id="PR00252">
    <property type="entry name" value="NRIONCHANNEL"/>
</dbReference>
<dbReference type="SUPFAM" id="SSF90112">
    <property type="entry name" value="Neurotransmitter-gated ion-channel transmembrane pore"/>
    <property type="match status" value="1"/>
</dbReference>
<dbReference type="SUPFAM" id="SSF63712">
    <property type="entry name" value="Nicotinic receptor ligand binding domain-like"/>
    <property type="match status" value="1"/>
</dbReference>
<dbReference type="PROSITE" id="PS00236">
    <property type="entry name" value="NEUROTR_ION_CHANNEL"/>
    <property type="match status" value="1"/>
</dbReference>
<gene>
    <name type="primary">Chrna2</name>
</gene>
<name>ACHA2_MOUSE</name>
<proteinExistence type="evidence at transcript level"/>
<feature type="signal peptide" evidence="4">
    <location>
        <begin position="1"/>
        <end position="27"/>
    </location>
</feature>
<feature type="chain" id="PRO_0000000341" description="Neuronal acetylcholine receptor subunit alpha-2">
    <location>
        <begin position="28"/>
        <end position="512"/>
    </location>
</feature>
<feature type="topological domain" description="Extracellular" evidence="4">
    <location>
        <begin position="28"/>
        <end position="241"/>
    </location>
</feature>
<feature type="transmembrane region" description="Helical" evidence="4">
    <location>
        <begin position="242"/>
        <end position="266"/>
    </location>
</feature>
<feature type="transmembrane region" description="Helical" evidence="4">
    <location>
        <begin position="274"/>
        <end position="292"/>
    </location>
</feature>
<feature type="transmembrane region" description="Helical" evidence="4">
    <location>
        <begin position="308"/>
        <end position="329"/>
    </location>
</feature>
<feature type="topological domain" description="Cytoplasmic" evidence="4">
    <location>
        <begin position="330"/>
        <end position="485"/>
    </location>
</feature>
<feature type="transmembrane region" description="Helical" evidence="4">
    <location>
        <begin position="486"/>
        <end position="504"/>
    </location>
</feature>
<feature type="glycosylation site" description="N-linked (GlcNAc...) asparagine" evidence="4">
    <location>
        <position position="56"/>
    </location>
</feature>
<feature type="glycosylation site" description="N-linked (GlcNAc...) asparagine" evidence="4">
    <location>
        <position position="106"/>
    </location>
</feature>
<feature type="glycosylation site" description="N-linked (GlcNAc...) asparagine" evidence="4">
    <location>
        <position position="212"/>
    </location>
</feature>
<feature type="disulfide bond" evidence="3">
    <location>
        <begin position="160"/>
        <end position="174"/>
    </location>
</feature>
<feature type="disulfide bond" description="Associated with receptor activation" evidence="3">
    <location>
        <begin position="224"/>
        <end position="225"/>
    </location>
</feature>
<protein>
    <recommendedName>
        <fullName>Neuronal acetylcholine receptor subunit alpha-2</fullName>
    </recommendedName>
</protein>
<keyword id="KW-1003">Cell membrane</keyword>
<keyword id="KW-1015">Disulfide bond</keyword>
<keyword id="KW-0325">Glycoprotein</keyword>
<keyword id="KW-0407">Ion channel</keyword>
<keyword id="KW-0406">Ion transport</keyword>
<keyword id="KW-1071">Ligand-gated ion channel</keyword>
<keyword id="KW-0472">Membrane</keyword>
<keyword id="KW-0675">Receptor</keyword>
<keyword id="KW-1185">Reference proteome</keyword>
<keyword id="KW-0732">Signal</keyword>
<keyword id="KW-0770">Synapse</keyword>
<keyword id="KW-0812">Transmembrane</keyword>
<keyword id="KW-1133">Transmembrane helix</keyword>
<keyword id="KW-0813">Transport</keyword>
<evidence type="ECO:0000250" key="1">
    <source>
        <dbReference type="UniProtKB" id="P02709"/>
    </source>
</evidence>
<evidence type="ECO:0000250" key="2">
    <source>
        <dbReference type="UniProtKB" id="P43681"/>
    </source>
</evidence>
<evidence type="ECO:0000250" key="3">
    <source>
        <dbReference type="UniProtKB" id="Q15822"/>
    </source>
</evidence>
<evidence type="ECO:0000255" key="4"/>
<evidence type="ECO:0000305" key="5"/>
<accession>Q91X60</accession>